<name>HLYC2_ECOLX</name>
<evidence type="ECO:0000250" key="1">
    <source>
        <dbReference type="UniProtKB" id="P06736"/>
    </source>
</evidence>
<evidence type="ECO:0000250" key="2">
    <source>
        <dbReference type="UniProtKB" id="P55132"/>
    </source>
</evidence>
<evidence type="ECO:0000303" key="3">
    <source>
    </source>
</evidence>
<evidence type="ECO:0000305" key="4"/>
<organism>
    <name type="scientific">Escherichia coli</name>
    <dbReference type="NCBI Taxonomy" id="562"/>
    <lineage>
        <taxon>Bacteria</taxon>
        <taxon>Pseudomonadati</taxon>
        <taxon>Pseudomonadota</taxon>
        <taxon>Gammaproteobacteria</taxon>
        <taxon>Enterobacterales</taxon>
        <taxon>Enterobacteriaceae</taxon>
        <taxon>Escherichia</taxon>
    </lineage>
</organism>
<proteinExistence type="inferred from homology"/>
<gene>
    <name evidence="3" type="primary">hlyC</name>
</gene>
<accession>P09985</accession>
<feature type="chain" id="PRO_0000217877" description="Protein-lysine myristoyltransferase HlyC">
    <location>
        <begin position="1"/>
        <end position="174"/>
    </location>
</feature>
<feature type="active site" evidence="2">
    <location>
        <position position="23"/>
    </location>
</feature>
<feature type="active site" evidence="2">
    <location>
        <position position="92"/>
    </location>
</feature>
<feature type="binding site" evidence="1">
    <location>
        <position position="151"/>
    </location>
    <ligand>
        <name>heme</name>
        <dbReference type="ChEBI" id="CHEBI:30413"/>
    </ligand>
</feature>
<reference key="1">
    <citation type="journal article" date="1985" name="FEBS Lett.">
        <title>Characterisation of HlyC and mechanism of activation and secretion of haemolysin from E. coli 2001.</title>
        <authorList>
            <person name="Nicaud J.-M."/>
            <person name="Mackman N."/>
            <person name="Gray L."/>
            <person name="Holland I.B."/>
        </authorList>
    </citation>
    <scope>NUCLEOTIDE SEQUENCE [GENOMIC DNA]</scope>
    <source>
        <strain>2001</strain>
    </source>
</reference>
<protein>
    <recommendedName>
        <fullName evidence="4">Protein-lysine myristoyltransferase HlyC</fullName>
        <ecNumber evidence="1">2.3.1.-</ecNumber>
    </recommendedName>
    <alternativeName>
        <fullName>Hemolysin C</fullName>
    </alternativeName>
    <alternativeName>
        <fullName evidence="4">Hemolysin-activating lysine-acyltransferase HlyC</fullName>
    </alternativeName>
    <alternativeName>
        <fullName evidence="3">Toxin-activating protein C, 2001</fullName>
    </alternativeName>
</protein>
<keyword id="KW-0012">Acyltransferase</keyword>
<keyword id="KW-0204">Cytolysis</keyword>
<keyword id="KW-0963">Cytoplasm</keyword>
<keyword id="KW-0349">Heme</keyword>
<keyword id="KW-0354">Hemolysis</keyword>
<keyword id="KW-0408">Iron</keyword>
<keyword id="KW-0479">Metal-binding</keyword>
<keyword id="KW-0808">Transferase</keyword>
<keyword id="KW-0843">Virulence</keyword>
<sequence>MNINKPLEILGHVSWLWASSPLHRNWPVSLFAINVLPAIRANQYVLLTRDNYPVAYCSWANLSLENEIKYLNDVTSLVAEDWTSGDRKWFIDWIAPFGDNGALYKYMRKKFPDELFLAIRVDPKTHVGKVSEFHGGKIDKHLANKIFKQYHHELITEVKNKTDFQFFINRLRGN</sequence>
<comment type="function">
    <text evidence="1">Protein-lysine myristoyltransferase that catalyzes myristoylation of the protoxin (HlyA) at two internal lysine residues, thereby converting it to the active toxin.</text>
</comment>
<comment type="catalytic activity">
    <reaction evidence="1">
        <text>tetradecanoyl-[ACP] + L-lysyl-[protein] = N(6)-tetradecanoyl-L-lysyl-[protein] + holo-[ACP] + H(+)</text>
        <dbReference type="Rhea" id="RHEA:70611"/>
        <dbReference type="Rhea" id="RHEA-COMP:9648"/>
        <dbReference type="Rhea" id="RHEA-COMP:9685"/>
        <dbReference type="Rhea" id="RHEA-COMP:9752"/>
        <dbReference type="Rhea" id="RHEA-COMP:15437"/>
        <dbReference type="ChEBI" id="CHEBI:15378"/>
        <dbReference type="ChEBI" id="CHEBI:29969"/>
        <dbReference type="ChEBI" id="CHEBI:64479"/>
        <dbReference type="ChEBI" id="CHEBI:78477"/>
        <dbReference type="ChEBI" id="CHEBI:141129"/>
    </reaction>
    <physiologicalReaction direction="left-to-right" evidence="1">
        <dbReference type="Rhea" id="RHEA:70612"/>
    </physiologicalReaction>
</comment>
<comment type="activity regulation">
    <text evidence="1">The acyltransferase activity is inhibited by heme.</text>
</comment>
<comment type="subunit">
    <text evidence="1">Monomer.</text>
</comment>
<comment type="subcellular location">
    <subcellularLocation>
        <location evidence="1">Cytoplasm</location>
    </subcellularLocation>
</comment>
<comment type="PTM">
    <text evidence="1">Proteolytically cleaved by the protease systems ClpAP, ClpXP and FtsH, leading to its degradation.</text>
</comment>
<comment type="similarity">
    <text evidence="4">Belongs to the RTX toxin acyltransferase family.</text>
</comment>
<dbReference type="EC" id="2.3.1.-" evidence="1"/>
<dbReference type="EMBL" id="X02768">
    <property type="protein sequence ID" value="CAA26545.1"/>
    <property type="molecule type" value="Genomic_DNA"/>
</dbReference>
<dbReference type="SMR" id="P09985"/>
<dbReference type="GO" id="GO:0005737">
    <property type="term" value="C:cytoplasm"/>
    <property type="evidence" value="ECO:0007669"/>
    <property type="project" value="UniProtKB-SubCell"/>
</dbReference>
<dbReference type="GO" id="GO:0140769">
    <property type="term" value="F:ACP-dependent peptidyl-lysine N6-myristoyltransferase activity"/>
    <property type="evidence" value="ECO:0007669"/>
    <property type="project" value="RHEA"/>
</dbReference>
<dbReference type="GO" id="GO:0046872">
    <property type="term" value="F:metal ion binding"/>
    <property type="evidence" value="ECO:0007669"/>
    <property type="project" value="UniProtKB-KW"/>
</dbReference>
<dbReference type="GO" id="GO:0031640">
    <property type="term" value="P:killing of cells of another organism"/>
    <property type="evidence" value="ECO:0007669"/>
    <property type="project" value="UniProtKB-KW"/>
</dbReference>
<dbReference type="GO" id="GO:0009404">
    <property type="term" value="P:toxin metabolic process"/>
    <property type="evidence" value="ECO:0007669"/>
    <property type="project" value="InterPro"/>
</dbReference>
<dbReference type="InterPro" id="IPR003996">
    <property type="entry name" value="RTX_toxin-activating_protC_bac"/>
</dbReference>
<dbReference type="Pfam" id="PF02794">
    <property type="entry name" value="HlyC"/>
    <property type="match status" value="1"/>
</dbReference>
<dbReference type="PRINTS" id="PR01489">
    <property type="entry name" value="RTXTOXINC"/>
</dbReference>